<keyword id="KW-1185">Reference proteome</keyword>
<evidence type="ECO:0000305" key="1"/>
<gene>
    <name type="ordered locus">At5g44490</name>
    <name type="ORF">MFC16.16</name>
</gene>
<reference key="1">
    <citation type="journal article" date="1999" name="DNA Res.">
        <title>Structural analysis of Arabidopsis thaliana chromosome 5. IX. Sequence features of the regions of 1,011,550 bp covered by seventeen P1 and TAC clones.</title>
        <authorList>
            <person name="Kaneko T."/>
            <person name="Katoh T."/>
            <person name="Sato S."/>
            <person name="Nakamura Y."/>
            <person name="Asamizu E."/>
            <person name="Kotani H."/>
            <person name="Miyajima N."/>
            <person name="Tabata S."/>
        </authorList>
    </citation>
    <scope>NUCLEOTIDE SEQUENCE [LARGE SCALE GENOMIC DNA]</scope>
    <source>
        <strain>cv. Columbia</strain>
    </source>
</reference>
<reference key="2">
    <citation type="journal article" date="2017" name="Plant J.">
        <title>Araport11: a complete reannotation of the Arabidopsis thaliana reference genome.</title>
        <authorList>
            <person name="Cheng C.Y."/>
            <person name="Krishnakumar V."/>
            <person name="Chan A.P."/>
            <person name="Thibaud-Nissen F."/>
            <person name="Schobel S."/>
            <person name="Town C.D."/>
        </authorList>
    </citation>
    <scope>GENOME REANNOTATION</scope>
    <source>
        <strain>cv. Columbia</strain>
    </source>
</reference>
<accession>Q9FI16</accession>
<accession>F4KA91</accession>
<organism>
    <name type="scientific">Arabidopsis thaliana</name>
    <name type="common">Mouse-ear cress</name>
    <dbReference type="NCBI Taxonomy" id="3702"/>
    <lineage>
        <taxon>Eukaryota</taxon>
        <taxon>Viridiplantae</taxon>
        <taxon>Streptophyta</taxon>
        <taxon>Embryophyta</taxon>
        <taxon>Tracheophyta</taxon>
        <taxon>Spermatophyta</taxon>
        <taxon>Magnoliopsida</taxon>
        <taxon>eudicotyledons</taxon>
        <taxon>Gunneridae</taxon>
        <taxon>Pentapetalae</taxon>
        <taxon>rosids</taxon>
        <taxon>malvids</taxon>
        <taxon>Brassicales</taxon>
        <taxon>Brassicaceae</taxon>
        <taxon>Camelineae</taxon>
        <taxon>Arabidopsis</taxon>
    </lineage>
</organism>
<proteinExistence type="evidence at transcript level"/>
<dbReference type="EMBL" id="AB017065">
    <property type="protein sequence ID" value="BAB09156.1"/>
    <property type="status" value="ALT_SEQ"/>
    <property type="molecule type" value="Genomic_DNA"/>
</dbReference>
<dbReference type="EMBL" id="CP002688">
    <property type="protein sequence ID" value="AED95114.2"/>
    <property type="molecule type" value="Genomic_DNA"/>
</dbReference>
<dbReference type="RefSeq" id="NP_001318739.1">
    <property type="nucleotide sequence ID" value="NM_001344550.1"/>
</dbReference>
<dbReference type="FunCoup" id="Q9FI16">
    <property type="interactions" value="12"/>
</dbReference>
<dbReference type="iPTMnet" id="Q9FI16"/>
<dbReference type="PaxDb" id="3702-AT5G44490.1"/>
<dbReference type="EnsemblPlants" id="AT5G44490.1">
    <property type="protein sequence ID" value="AT5G44490.1"/>
    <property type="gene ID" value="AT5G44490"/>
</dbReference>
<dbReference type="GeneID" id="834476"/>
<dbReference type="Gramene" id="AT5G44490.1">
    <property type="protein sequence ID" value="AT5G44490.1"/>
    <property type="gene ID" value="AT5G44490"/>
</dbReference>
<dbReference type="KEGG" id="ath:AT5G44490"/>
<dbReference type="Araport" id="AT5G44490"/>
<dbReference type="TAIR" id="AT5G44490"/>
<dbReference type="eggNOG" id="ENOG502RRIF">
    <property type="taxonomic scope" value="Eukaryota"/>
</dbReference>
<dbReference type="InParanoid" id="Q9FI16"/>
<dbReference type="PhylomeDB" id="Q9FI16"/>
<dbReference type="PRO" id="PR:Q9FI16"/>
<dbReference type="Proteomes" id="UP000006548">
    <property type="component" value="Chromosome 5"/>
</dbReference>
<dbReference type="ExpressionAtlas" id="Q9FI16">
    <property type="expression patterns" value="baseline and differential"/>
</dbReference>
<dbReference type="CDD" id="cd22160">
    <property type="entry name" value="F-box_AtFBL13-like"/>
    <property type="match status" value="1"/>
</dbReference>
<dbReference type="InterPro" id="IPR036047">
    <property type="entry name" value="F-box-like_dom_sf"/>
</dbReference>
<dbReference type="InterPro" id="IPR053781">
    <property type="entry name" value="F-box_AtFBL13-like"/>
</dbReference>
<dbReference type="InterPro" id="IPR001810">
    <property type="entry name" value="F-box_dom"/>
</dbReference>
<dbReference type="InterPro" id="IPR006566">
    <property type="entry name" value="FBD"/>
</dbReference>
<dbReference type="InterPro" id="IPR050232">
    <property type="entry name" value="FBL13/AtMIF1-like"/>
</dbReference>
<dbReference type="InterPro" id="IPR055411">
    <property type="entry name" value="LRR_FXL15/At3g58940/PEG3-like"/>
</dbReference>
<dbReference type="PANTHER" id="PTHR31900">
    <property type="entry name" value="F-BOX/RNI SUPERFAMILY PROTEIN-RELATED"/>
    <property type="match status" value="1"/>
</dbReference>
<dbReference type="PANTHER" id="PTHR31900:SF25">
    <property type="entry name" value="FBD DOMAIN-CONTAINING PROTEIN"/>
    <property type="match status" value="1"/>
</dbReference>
<dbReference type="Pfam" id="PF00646">
    <property type="entry name" value="F-box"/>
    <property type="match status" value="1"/>
</dbReference>
<dbReference type="Pfam" id="PF08387">
    <property type="entry name" value="FBD"/>
    <property type="match status" value="1"/>
</dbReference>
<dbReference type="Pfam" id="PF24758">
    <property type="entry name" value="LRR_At5g56370"/>
    <property type="match status" value="1"/>
</dbReference>
<dbReference type="SMART" id="SM00579">
    <property type="entry name" value="FBD"/>
    <property type="match status" value="1"/>
</dbReference>
<dbReference type="SUPFAM" id="SSF81383">
    <property type="entry name" value="F-box domain"/>
    <property type="match status" value="1"/>
</dbReference>
<name>FBD18_ARATH</name>
<feature type="chain" id="PRO_0000283150" description="FBD-associated F-box protein At5g44490">
    <location>
        <begin position="1"/>
        <end position="481"/>
    </location>
</feature>
<feature type="domain" description="F-box">
    <location>
        <begin position="17"/>
        <end position="64"/>
    </location>
</feature>
<feature type="domain" description="FBD">
    <location>
        <begin position="370"/>
        <end position="423"/>
    </location>
</feature>
<sequence length="481" mass="54862">MEESVKRCRGFSDAREDLMSKLTDALISQVLFYLPTKEAVSTSVLSSRWKSVWLLIPDLDLNSSAFPSNNAFVGFIDKFIDFSKIENSCLHKLKLSIRKEHENDNKSCVTRWIGFVATHKLKHLDVECLLWKKKCLEVMPLTLYITQTLFYLRLHRVLLGNVESISLPCLKTMHLEQNVYANETCLEFFISSCPVLEDLSIVRKVDDNVKVLRVLSQTLTSLFVAFDYGEHRRGFHGYYSLDFGVLIDAPRLKYLKIGDDISRSKIVSNMDSLAKIEIVGLFYIERAFHNKVARNFFIGISRVRDMIISDRAMWFMSFYFLREESTPQFCNLSSLEVKISWSRGINLSMFLDNSPNLKSMVLVIYCKNLEKSVSFSSVPQCLLSSLEFVEIKISRFGIISLGIGIARFFVENSVVLKKLVVHSSRPMRKKSLVAFENLLALPRRSSMCQIISVVDAGSCGGENERCSLAADDAYLLEPSGR</sequence>
<protein>
    <recommendedName>
        <fullName>FBD-associated F-box protein At5g44490</fullName>
    </recommendedName>
</protein>
<comment type="sequence caution" evidence="1">
    <conflict type="erroneous gene model prediction">
        <sequence resource="EMBL-CDS" id="BAB09156"/>
    </conflict>
</comment>